<feature type="chain" id="PRO_0000051913" description="7-alpha-hydroxycholest-4-en-3-one 12-alpha-hydroxylase">
    <location>
        <begin position="1"/>
        <end position="501"/>
    </location>
</feature>
<feature type="transmembrane region" description="Helical" evidence="4">
    <location>
        <begin position="1"/>
        <end position="21"/>
    </location>
</feature>
<feature type="binding site" description="axial binding residue" evidence="1">
    <location>
        <position position="440"/>
    </location>
    <ligand>
        <name>heme</name>
        <dbReference type="ChEBI" id="CHEBI:30413"/>
    </ligand>
    <ligandPart>
        <name>Fe</name>
        <dbReference type="ChEBI" id="CHEBI:18248"/>
    </ligandPart>
</feature>
<feature type="modified residue" description="Phosphoserine" evidence="12">
    <location>
        <position position="326"/>
    </location>
</feature>
<feature type="sequence variant" id="VAR_055102" description="In dbSNP:rs9865715." evidence="5 6 7">
    <original>S</original>
    <variation>P</variation>
    <location>
        <position position="88"/>
    </location>
</feature>
<feature type="sequence variant" id="VAR_010381" description="In dbSNP:rs199955644." evidence="5">
    <original>R</original>
    <variation>H</variation>
    <location>
        <position position="234"/>
    </location>
</feature>
<feature type="sequence variant" id="VAR_055103" description="In dbSNP:rs35764459.">
    <original>K</original>
    <variation>R</variation>
    <location>
        <position position="238"/>
    </location>
</feature>
<feature type="sequence variant" id="VAR_055104" description="In dbSNP:rs35637877.">
    <original>L</original>
    <variation>F</variation>
    <location>
        <position position="357"/>
    </location>
</feature>
<feature type="sequence conflict" description="In Ref. 2; BAG37730." evidence="9" ref="2">
    <original>M</original>
    <variation>I</variation>
    <location>
        <position position="24"/>
    </location>
</feature>
<feature type="sequence conflict" description="In Ref. 4; AAH67444." evidence="9" ref="4">
    <original>M</original>
    <variation>V</variation>
    <location>
        <position position="60"/>
    </location>
</feature>
<feature type="sequence conflict" description="In Ref. 4; AAH67434/AAH67441." evidence="9" ref="4">
    <original>I</original>
    <variation>T</variation>
    <location>
        <position position="454"/>
    </location>
</feature>
<feature type="sequence conflict" description="In Ref. 4; AAH67444." evidence="9" ref="4">
    <original>P</original>
    <variation>L</variation>
    <location>
        <position position="468"/>
    </location>
</feature>
<feature type="turn" evidence="13">
    <location>
        <begin position="41"/>
        <end position="45"/>
    </location>
</feature>
<feature type="helix" evidence="13">
    <location>
        <begin position="46"/>
        <end position="51"/>
    </location>
</feature>
<feature type="helix" evidence="13">
    <location>
        <begin position="53"/>
        <end position="64"/>
    </location>
</feature>
<feature type="strand" evidence="13">
    <location>
        <begin position="66"/>
        <end position="72"/>
    </location>
</feature>
<feature type="strand" evidence="13">
    <location>
        <begin position="75"/>
        <end position="80"/>
    </location>
</feature>
<feature type="helix" evidence="13">
    <location>
        <begin position="83"/>
        <end position="85"/>
    </location>
</feature>
<feature type="helix" evidence="13">
    <location>
        <begin position="86"/>
        <end position="90"/>
    </location>
</feature>
<feature type="strand" evidence="13">
    <location>
        <begin position="97"/>
        <end position="99"/>
    </location>
</feature>
<feature type="helix" evidence="13">
    <location>
        <begin position="100"/>
        <end position="111"/>
    </location>
</feature>
<feature type="helix" evidence="13">
    <location>
        <begin position="119"/>
        <end position="130"/>
    </location>
</feature>
<feature type="helix" evidence="13">
    <location>
        <begin position="133"/>
        <end position="153"/>
    </location>
</feature>
<feature type="strand" evidence="13">
    <location>
        <begin position="165"/>
        <end position="168"/>
    </location>
</feature>
<feature type="helix" evidence="13">
    <location>
        <begin position="169"/>
        <end position="186"/>
    </location>
</feature>
<feature type="helix" evidence="13">
    <location>
        <begin position="192"/>
        <end position="217"/>
    </location>
</feature>
<feature type="helix" evidence="13">
    <location>
        <begin position="223"/>
        <end position="239"/>
    </location>
</feature>
<feature type="helix" evidence="13">
    <location>
        <begin position="253"/>
        <end position="264"/>
    </location>
</feature>
<feature type="helix" evidence="13">
    <location>
        <begin position="269"/>
        <end position="284"/>
    </location>
</feature>
<feature type="helix" evidence="13">
    <location>
        <begin position="287"/>
        <end position="299"/>
    </location>
</feature>
<feature type="helix" evidence="13">
    <location>
        <begin position="302"/>
        <end position="313"/>
    </location>
</feature>
<feature type="helix" evidence="13">
    <location>
        <begin position="334"/>
        <end position="336"/>
    </location>
</feature>
<feature type="helix" evidence="13">
    <location>
        <begin position="338"/>
        <end position="351"/>
    </location>
</feature>
<feature type="strand" evidence="13">
    <location>
        <begin position="352"/>
        <end position="354"/>
    </location>
</feature>
<feature type="strand" evidence="13">
    <location>
        <begin position="356"/>
        <end position="362"/>
    </location>
</feature>
<feature type="strand" evidence="13">
    <location>
        <begin position="364"/>
        <end position="367"/>
    </location>
</feature>
<feature type="strand" evidence="14">
    <location>
        <begin position="369"/>
        <end position="371"/>
    </location>
</feature>
<feature type="strand" evidence="13">
    <location>
        <begin position="373"/>
        <end position="376"/>
    </location>
</feature>
<feature type="strand" evidence="13">
    <location>
        <begin position="381"/>
        <end position="384"/>
    </location>
</feature>
<feature type="helix" evidence="13">
    <location>
        <begin position="386"/>
        <end position="389"/>
    </location>
</feature>
<feature type="turn" evidence="13">
    <location>
        <begin position="390"/>
        <end position="392"/>
    </location>
</feature>
<feature type="turn" evidence="13">
    <location>
        <begin position="394"/>
        <end position="396"/>
    </location>
</feature>
<feature type="strand" evidence="13">
    <location>
        <begin position="397"/>
        <end position="399"/>
    </location>
</feature>
<feature type="turn" evidence="13">
    <location>
        <begin position="405"/>
        <end position="408"/>
    </location>
</feature>
<feature type="strand" evidence="14">
    <location>
        <begin position="419"/>
        <end position="421"/>
    </location>
</feature>
<feature type="strand" evidence="14">
    <location>
        <begin position="424"/>
        <end position="427"/>
    </location>
</feature>
<feature type="helix" evidence="13">
    <location>
        <begin position="436"/>
        <end position="438"/>
    </location>
</feature>
<feature type="helix" evidence="13">
    <location>
        <begin position="443"/>
        <end position="460"/>
    </location>
</feature>
<feature type="strand" evidence="13">
    <location>
        <begin position="461"/>
        <end position="466"/>
    </location>
</feature>
<feature type="helix" evidence="13">
    <location>
        <begin position="477"/>
        <end position="479"/>
    </location>
</feature>
<feature type="strand" evidence="13">
    <location>
        <begin position="481"/>
        <end position="484"/>
    </location>
</feature>
<feature type="strand" evidence="13">
    <location>
        <begin position="487"/>
        <end position="489"/>
    </location>
</feature>
<feature type="strand" evidence="13">
    <location>
        <begin position="492"/>
        <end position="497"/>
    </location>
</feature>
<evidence type="ECO:0000250" key="1"/>
<evidence type="ECO:0000250" key="2">
    <source>
        <dbReference type="UniProtKB" id="O02766"/>
    </source>
</evidence>
<evidence type="ECO:0000250" key="3">
    <source>
        <dbReference type="UniProtKB" id="O88962"/>
    </source>
</evidence>
<evidence type="ECO:0000255" key="4"/>
<evidence type="ECO:0000269" key="5">
    <source>
    </source>
</evidence>
<evidence type="ECO:0000269" key="6">
    <source>
    </source>
</evidence>
<evidence type="ECO:0000269" key="7">
    <source>
    </source>
</evidence>
<evidence type="ECO:0000303" key="8">
    <source>
    </source>
</evidence>
<evidence type="ECO:0000305" key="9"/>
<evidence type="ECO:0000305" key="10">
    <source>
    </source>
</evidence>
<evidence type="ECO:0000312" key="11">
    <source>
        <dbReference type="HGNC" id="HGNC:2653"/>
    </source>
</evidence>
<evidence type="ECO:0007744" key="12">
    <source>
    </source>
</evidence>
<evidence type="ECO:0007829" key="13">
    <source>
        <dbReference type="PDB" id="7LYX"/>
    </source>
</evidence>
<evidence type="ECO:0007829" key="14">
    <source>
        <dbReference type="PDB" id="8EOH"/>
    </source>
</evidence>
<name>CP8B1_HUMAN</name>
<proteinExistence type="evidence at protein level"/>
<organism>
    <name type="scientific">Homo sapiens</name>
    <name type="common">Human</name>
    <dbReference type="NCBI Taxonomy" id="9606"/>
    <lineage>
        <taxon>Eukaryota</taxon>
        <taxon>Metazoa</taxon>
        <taxon>Chordata</taxon>
        <taxon>Craniata</taxon>
        <taxon>Vertebrata</taxon>
        <taxon>Euteleostomi</taxon>
        <taxon>Mammalia</taxon>
        <taxon>Eutheria</taxon>
        <taxon>Euarchontoglires</taxon>
        <taxon>Primates</taxon>
        <taxon>Haplorrhini</taxon>
        <taxon>Catarrhini</taxon>
        <taxon>Hominidae</taxon>
        <taxon>Homo</taxon>
    </lineage>
</organism>
<gene>
    <name evidence="8 11" type="primary">CYP8B1</name>
    <name type="synonym">CYP12</name>
</gene>
<reference key="1">
    <citation type="journal article" date="1999" name="Genomics">
        <title>Structure and chromosomal assignment of the sterol 12alpha-hydroxylase gene (CYP8B1) in human and mouse: eukaryotic cytochrome P-450 gene devoid of introns.</title>
        <authorList>
            <person name="Gaafvels M."/>
            <person name="Olin M."/>
            <person name="Chowdhary B.P."/>
            <person name="Raudsepp T."/>
            <person name="Andersson U."/>
            <person name="Persson B."/>
            <person name="Jansson M."/>
            <person name="Bjoerkhem I."/>
            <person name="Eggertsen G."/>
        </authorList>
    </citation>
    <scope>NUCLEOTIDE SEQUENCE [GENOMIC DNA / MRNA]</scope>
    <scope>VARIANTS PRO-88 AND HIS-234</scope>
    <scope>FUNCTION</scope>
    <scope>CATALYTIC ACTIVITY</scope>
    <scope>TISSUE SPECIFICITY</scope>
    <source>
        <tissue>Liver</tissue>
    </source>
</reference>
<reference key="2">
    <citation type="journal article" date="2004" name="Nat. Genet.">
        <title>Complete sequencing and characterization of 21,243 full-length human cDNAs.</title>
        <authorList>
            <person name="Ota T."/>
            <person name="Suzuki Y."/>
            <person name="Nishikawa T."/>
            <person name="Otsuki T."/>
            <person name="Sugiyama T."/>
            <person name="Irie R."/>
            <person name="Wakamatsu A."/>
            <person name="Hayashi K."/>
            <person name="Sato H."/>
            <person name="Nagai K."/>
            <person name="Kimura K."/>
            <person name="Makita H."/>
            <person name="Sekine M."/>
            <person name="Obayashi M."/>
            <person name="Nishi T."/>
            <person name="Shibahara T."/>
            <person name="Tanaka T."/>
            <person name="Ishii S."/>
            <person name="Yamamoto J."/>
            <person name="Saito K."/>
            <person name="Kawai Y."/>
            <person name="Isono Y."/>
            <person name="Nakamura Y."/>
            <person name="Nagahari K."/>
            <person name="Murakami K."/>
            <person name="Yasuda T."/>
            <person name="Iwayanagi T."/>
            <person name="Wagatsuma M."/>
            <person name="Shiratori A."/>
            <person name="Sudo H."/>
            <person name="Hosoiri T."/>
            <person name="Kaku Y."/>
            <person name="Kodaira H."/>
            <person name="Kondo H."/>
            <person name="Sugawara M."/>
            <person name="Takahashi M."/>
            <person name="Kanda K."/>
            <person name="Yokoi T."/>
            <person name="Furuya T."/>
            <person name="Kikkawa E."/>
            <person name="Omura Y."/>
            <person name="Abe K."/>
            <person name="Kamihara K."/>
            <person name="Katsuta N."/>
            <person name="Sato K."/>
            <person name="Tanikawa M."/>
            <person name="Yamazaki M."/>
            <person name="Ninomiya K."/>
            <person name="Ishibashi T."/>
            <person name="Yamashita H."/>
            <person name="Murakawa K."/>
            <person name="Fujimori K."/>
            <person name="Tanai H."/>
            <person name="Kimata M."/>
            <person name="Watanabe M."/>
            <person name="Hiraoka S."/>
            <person name="Chiba Y."/>
            <person name="Ishida S."/>
            <person name="Ono Y."/>
            <person name="Takiguchi S."/>
            <person name="Watanabe S."/>
            <person name="Yosida M."/>
            <person name="Hotuta T."/>
            <person name="Kusano J."/>
            <person name="Kanehori K."/>
            <person name="Takahashi-Fujii A."/>
            <person name="Hara H."/>
            <person name="Tanase T.-O."/>
            <person name="Nomura Y."/>
            <person name="Togiya S."/>
            <person name="Komai F."/>
            <person name="Hara R."/>
            <person name="Takeuchi K."/>
            <person name="Arita M."/>
            <person name="Imose N."/>
            <person name="Musashino K."/>
            <person name="Yuuki H."/>
            <person name="Oshima A."/>
            <person name="Sasaki N."/>
            <person name="Aotsuka S."/>
            <person name="Yoshikawa Y."/>
            <person name="Matsunawa H."/>
            <person name="Ichihara T."/>
            <person name="Shiohata N."/>
            <person name="Sano S."/>
            <person name="Moriya S."/>
            <person name="Momiyama H."/>
            <person name="Satoh N."/>
            <person name="Takami S."/>
            <person name="Terashima Y."/>
            <person name="Suzuki O."/>
            <person name="Nakagawa S."/>
            <person name="Senoh A."/>
            <person name="Mizoguchi H."/>
            <person name="Goto Y."/>
            <person name="Shimizu F."/>
            <person name="Wakebe H."/>
            <person name="Hishigaki H."/>
            <person name="Watanabe T."/>
            <person name="Sugiyama A."/>
            <person name="Takemoto M."/>
            <person name="Kawakami B."/>
            <person name="Yamazaki M."/>
            <person name="Watanabe K."/>
            <person name="Kumagai A."/>
            <person name="Itakura S."/>
            <person name="Fukuzumi Y."/>
            <person name="Fujimori Y."/>
            <person name="Komiyama M."/>
            <person name="Tashiro H."/>
            <person name="Tanigami A."/>
            <person name="Fujiwara T."/>
            <person name="Ono T."/>
            <person name="Yamada K."/>
            <person name="Fujii Y."/>
            <person name="Ozaki K."/>
            <person name="Hirao M."/>
            <person name="Ohmori Y."/>
            <person name="Kawabata A."/>
            <person name="Hikiji T."/>
            <person name="Kobatake N."/>
            <person name="Inagaki H."/>
            <person name="Ikema Y."/>
            <person name="Okamoto S."/>
            <person name="Okitani R."/>
            <person name="Kawakami T."/>
            <person name="Noguchi S."/>
            <person name="Itoh T."/>
            <person name="Shigeta K."/>
            <person name="Senba T."/>
            <person name="Matsumura K."/>
            <person name="Nakajima Y."/>
            <person name="Mizuno T."/>
            <person name="Morinaga M."/>
            <person name="Sasaki M."/>
            <person name="Togashi T."/>
            <person name="Oyama M."/>
            <person name="Hata H."/>
            <person name="Watanabe M."/>
            <person name="Komatsu T."/>
            <person name="Mizushima-Sugano J."/>
            <person name="Satoh T."/>
            <person name="Shirai Y."/>
            <person name="Takahashi Y."/>
            <person name="Nakagawa K."/>
            <person name="Okumura K."/>
            <person name="Nagase T."/>
            <person name="Nomura N."/>
            <person name="Kikuchi H."/>
            <person name="Masuho Y."/>
            <person name="Yamashita R."/>
            <person name="Nakai K."/>
            <person name="Yada T."/>
            <person name="Nakamura Y."/>
            <person name="Ohara O."/>
            <person name="Isogai T."/>
            <person name="Sugano S."/>
        </authorList>
    </citation>
    <scope>NUCLEOTIDE SEQUENCE [LARGE SCALE MRNA]</scope>
    <scope>VARIANT PRO-88</scope>
    <source>
        <tissue>Liver</tissue>
    </source>
</reference>
<reference key="3">
    <citation type="journal article" date="2006" name="Nature">
        <title>The DNA sequence, annotation and analysis of human chromosome 3.</title>
        <authorList>
            <person name="Muzny D.M."/>
            <person name="Scherer S.E."/>
            <person name="Kaul R."/>
            <person name="Wang J."/>
            <person name="Yu J."/>
            <person name="Sudbrak R."/>
            <person name="Buhay C.J."/>
            <person name="Chen R."/>
            <person name="Cree A."/>
            <person name="Ding Y."/>
            <person name="Dugan-Rocha S."/>
            <person name="Gill R."/>
            <person name="Gunaratne P."/>
            <person name="Harris R.A."/>
            <person name="Hawes A.C."/>
            <person name="Hernandez J."/>
            <person name="Hodgson A.V."/>
            <person name="Hume J."/>
            <person name="Jackson A."/>
            <person name="Khan Z.M."/>
            <person name="Kovar-Smith C."/>
            <person name="Lewis L.R."/>
            <person name="Lozado R.J."/>
            <person name="Metzker M.L."/>
            <person name="Milosavljevic A."/>
            <person name="Miner G.R."/>
            <person name="Morgan M.B."/>
            <person name="Nazareth L.V."/>
            <person name="Scott G."/>
            <person name="Sodergren E."/>
            <person name="Song X.-Z."/>
            <person name="Steffen D."/>
            <person name="Wei S."/>
            <person name="Wheeler D.A."/>
            <person name="Wright M.W."/>
            <person name="Worley K.C."/>
            <person name="Yuan Y."/>
            <person name="Zhang Z."/>
            <person name="Adams C.Q."/>
            <person name="Ansari-Lari M.A."/>
            <person name="Ayele M."/>
            <person name="Brown M.J."/>
            <person name="Chen G."/>
            <person name="Chen Z."/>
            <person name="Clendenning J."/>
            <person name="Clerc-Blankenburg K.P."/>
            <person name="Chen R."/>
            <person name="Chen Z."/>
            <person name="Davis C."/>
            <person name="Delgado O."/>
            <person name="Dinh H.H."/>
            <person name="Dong W."/>
            <person name="Draper H."/>
            <person name="Ernst S."/>
            <person name="Fu G."/>
            <person name="Gonzalez-Garay M.L."/>
            <person name="Garcia D.K."/>
            <person name="Gillett W."/>
            <person name="Gu J."/>
            <person name="Hao B."/>
            <person name="Haugen E."/>
            <person name="Havlak P."/>
            <person name="He X."/>
            <person name="Hennig S."/>
            <person name="Hu S."/>
            <person name="Huang W."/>
            <person name="Jackson L.R."/>
            <person name="Jacob L.S."/>
            <person name="Kelly S.H."/>
            <person name="Kube M."/>
            <person name="Levy R."/>
            <person name="Li Z."/>
            <person name="Liu B."/>
            <person name="Liu J."/>
            <person name="Liu W."/>
            <person name="Lu J."/>
            <person name="Maheshwari M."/>
            <person name="Nguyen B.-V."/>
            <person name="Okwuonu G.O."/>
            <person name="Palmeiri A."/>
            <person name="Pasternak S."/>
            <person name="Perez L.M."/>
            <person name="Phelps K.A."/>
            <person name="Plopper F.J."/>
            <person name="Qiang B."/>
            <person name="Raymond C."/>
            <person name="Rodriguez R."/>
            <person name="Saenphimmachak C."/>
            <person name="Santibanez J."/>
            <person name="Shen H."/>
            <person name="Shen Y."/>
            <person name="Subramanian S."/>
            <person name="Tabor P.E."/>
            <person name="Verduzco D."/>
            <person name="Waldron L."/>
            <person name="Wang J."/>
            <person name="Wang J."/>
            <person name="Wang Q."/>
            <person name="Williams G.A."/>
            <person name="Wong G.K.-S."/>
            <person name="Yao Z."/>
            <person name="Zhang J."/>
            <person name="Zhang X."/>
            <person name="Zhao G."/>
            <person name="Zhou J."/>
            <person name="Zhou Y."/>
            <person name="Nelson D."/>
            <person name="Lehrach H."/>
            <person name="Reinhardt R."/>
            <person name="Naylor S.L."/>
            <person name="Yang H."/>
            <person name="Olson M."/>
            <person name="Weinstock G."/>
            <person name="Gibbs R.A."/>
        </authorList>
    </citation>
    <scope>NUCLEOTIDE SEQUENCE [LARGE SCALE GENOMIC DNA]</scope>
</reference>
<reference key="4">
    <citation type="journal article" date="2004" name="Genome Res.">
        <title>The status, quality, and expansion of the NIH full-length cDNA project: the Mammalian Gene Collection (MGC).</title>
        <authorList>
            <consortium name="The MGC Project Team"/>
        </authorList>
    </citation>
    <scope>NUCLEOTIDE SEQUENCE [LARGE SCALE MRNA]</scope>
    <scope>VARIANT PRO-88</scope>
</reference>
<reference key="5">
    <citation type="journal article" date="2014" name="J. Proteomics">
        <title>An enzyme assisted RP-RPLC approach for in-depth analysis of human liver phosphoproteome.</title>
        <authorList>
            <person name="Bian Y."/>
            <person name="Song C."/>
            <person name="Cheng K."/>
            <person name="Dong M."/>
            <person name="Wang F."/>
            <person name="Huang J."/>
            <person name="Sun D."/>
            <person name="Wang L."/>
            <person name="Ye M."/>
            <person name="Zou H."/>
        </authorList>
    </citation>
    <scope>PHOSPHORYLATION [LARGE SCALE ANALYSIS] AT SER-326</scope>
    <scope>IDENTIFICATION BY MASS SPECTROMETRY [LARGE SCALE ANALYSIS]</scope>
    <source>
        <tissue>Liver</tissue>
    </source>
</reference>
<comment type="function">
    <text evidence="2 3 5">A cytochrome P450 monooxygenase involved in primary bile acid biosynthesis. Catalyzes the 12alpha-hydroxylation of 7alpha-hydroxy-4-cholesten-3-one, an intermediate metabolite in cholic acid biosynthesis (PubMed:10051404). Controls biliary balance of cholic acid and chenodeoxycholic acid, ultimately regulating the intestinal absorption of dietary lipids (By similarity). Mechanistically, uses molecular oxygen inserting one oxygen atom into a substrate, and reducing the second into a water molecule, with two electrons provided by NADPH via cytochrome P450 reductase (CPR; NADPH--hemoprotein reductase) (By similarity).</text>
</comment>
<comment type="catalytic activity">
    <reaction evidence="5">
        <text>7alpha-hydroxycholest-4-en-3-one + reduced [NADPH--hemoprotein reductase] + O2 = 7alpha,12alpha-dihydroxycholest-4-en-3-one + oxidized [NADPH--hemoprotein reductase] + H2O + H(+)</text>
        <dbReference type="Rhea" id="RHEA:46752"/>
        <dbReference type="Rhea" id="RHEA-COMP:11964"/>
        <dbReference type="Rhea" id="RHEA-COMP:11965"/>
        <dbReference type="ChEBI" id="CHEBI:15377"/>
        <dbReference type="ChEBI" id="CHEBI:15378"/>
        <dbReference type="ChEBI" id="CHEBI:15379"/>
        <dbReference type="ChEBI" id="CHEBI:17899"/>
        <dbReference type="ChEBI" id="CHEBI:28477"/>
        <dbReference type="ChEBI" id="CHEBI:57618"/>
        <dbReference type="ChEBI" id="CHEBI:58210"/>
        <dbReference type="EC" id="1.14.14.139"/>
    </reaction>
    <physiologicalReaction direction="left-to-right" evidence="10">
        <dbReference type="Rhea" id="RHEA:46753"/>
    </physiologicalReaction>
</comment>
<comment type="catalytic activity">
    <reaction evidence="5">
        <text>5beta-cholestane-3alpha,7alpha-diol + reduced [NADPH--hemoprotein reductase] + O2 = 5beta-cholestane-3alpha,7alpha,12alpha-triol + oxidized [NADPH--hemoprotein reductase] + H2O + H(+)</text>
        <dbReference type="Rhea" id="RHEA:15261"/>
        <dbReference type="Rhea" id="RHEA-COMP:11964"/>
        <dbReference type="Rhea" id="RHEA-COMP:11965"/>
        <dbReference type="ChEBI" id="CHEBI:15377"/>
        <dbReference type="ChEBI" id="CHEBI:15378"/>
        <dbReference type="ChEBI" id="CHEBI:15379"/>
        <dbReference type="ChEBI" id="CHEBI:16496"/>
        <dbReference type="ChEBI" id="CHEBI:28047"/>
        <dbReference type="ChEBI" id="CHEBI:57618"/>
        <dbReference type="ChEBI" id="CHEBI:58210"/>
        <dbReference type="EC" id="1.14.14.139"/>
    </reaction>
    <physiologicalReaction direction="left-to-right" evidence="10">
        <dbReference type="Rhea" id="RHEA:15262"/>
    </physiologicalReaction>
</comment>
<comment type="catalytic activity">
    <reaction evidence="5">
        <text>chenodeoxycholate + reduced [NADPH--hemoprotein reductase] + O2 = cholate + oxidized [NADPH--hemoprotein reductase] + H2O + H(+)</text>
        <dbReference type="Rhea" id="RHEA:65700"/>
        <dbReference type="Rhea" id="RHEA-COMP:11964"/>
        <dbReference type="Rhea" id="RHEA-COMP:11965"/>
        <dbReference type="ChEBI" id="CHEBI:15377"/>
        <dbReference type="ChEBI" id="CHEBI:15378"/>
        <dbReference type="ChEBI" id="CHEBI:15379"/>
        <dbReference type="ChEBI" id="CHEBI:29747"/>
        <dbReference type="ChEBI" id="CHEBI:36234"/>
        <dbReference type="ChEBI" id="CHEBI:57618"/>
        <dbReference type="ChEBI" id="CHEBI:58210"/>
        <dbReference type="EC" id="1.14.14.139"/>
    </reaction>
    <physiologicalReaction direction="left-to-right" evidence="10">
        <dbReference type="Rhea" id="RHEA:65701"/>
    </physiologicalReaction>
</comment>
<comment type="cofactor">
    <cofactor evidence="2">
        <name>heme</name>
        <dbReference type="ChEBI" id="CHEBI:30413"/>
    </cofactor>
</comment>
<comment type="pathway">
    <text evidence="3">Lipid metabolism; bile acid biosynthesis.</text>
</comment>
<comment type="subcellular location">
    <subcellularLocation>
        <location evidence="2">Endoplasmic reticulum membrane</location>
        <topology evidence="4">Single-pass membrane protein</topology>
    </subcellularLocation>
    <subcellularLocation>
        <location evidence="2">Microsome membrane</location>
        <topology evidence="4">Single-pass membrane protein</topology>
    </subcellularLocation>
</comment>
<comment type="tissue specificity">
    <text evidence="5">Liver.</text>
</comment>
<comment type="similarity">
    <text evidence="9">Belongs to the cytochrome P450 family.</text>
</comment>
<keyword id="KW-0002">3D-structure</keyword>
<keyword id="KW-0256">Endoplasmic reticulum</keyword>
<keyword id="KW-0349">Heme</keyword>
<keyword id="KW-0408">Iron</keyword>
<keyword id="KW-0444">Lipid biosynthesis</keyword>
<keyword id="KW-0443">Lipid metabolism</keyword>
<keyword id="KW-0472">Membrane</keyword>
<keyword id="KW-0479">Metal-binding</keyword>
<keyword id="KW-0492">Microsome</keyword>
<keyword id="KW-0503">Monooxygenase</keyword>
<keyword id="KW-0560">Oxidoreductase</keyword>
<keyword id="KW-0597">Phosphoprotein</keyword>
<keyword id="KW-1267">Proteomics identification</keyword>
<keyword id="KW-1185">Reference proteome</keyword>
<keyword id="KW-0752">Steroid biosynthesis</keyword>
<keyword id="KW-0812">Transmembrane</keyword>
<keyword id="KW-1133">Transmembrane helix</keyword>
<sequence>MVLWGPVLGALLVVIAGYLCLPGMLRQRRPWEPPLDKGTVPWLGHAMAFRKNMFEFLKRMRTKHGDVFTVQLGGQYFTFVMDPLSFGSILKDTQRKLDFGQYAKKLVLKVFGYRSVQGDHEMIHSASTKHLRGDGLKDLNETMLDSLSFVMLTSKGWSLDASCWHEDSLFRFCYYILFTAGYLSLFGYTKDKEQDLLQAGELFMEFRKFDLLFPRFVYSLLWPREWLEVGRLQRLFHKMLSVSHSQEKEGISNWLGNMLQFLREQGVPSAMQDKFNFMMLWASQGNTGPTSFWALLYLLKHPEAIRAVREEATQVLGEARLETKQSFAFKLGALQHTPVLDSVVEETLRLRAAPTLLRLVHEDYTLKMSSGQEYLFRHGDILALFPYLSVHMDPDIHPEPTVFKYDRFLNPNGSRKVDFFKTGKKIHHYTMPWGSGVSICPGRFFALSEVKLFILLMVTHFDLELVDPDTPLPHVDPQRWGFGTMQPSHDVRFRYRLHPTE</sequence>
<protein>
    <recommendedName>
        <fullName>7-alpha-hydroxycholest-4-en-3-one 12-alpha-hydroxylase</fullName>
        <ecNumber evidence="5">1.14.14.139</ecNumber>
    </recommendedName>
    <alternativeName>
        <fullName>7-alpha-hydroxy-4-cholesten-3-one 12-alpha-hydroxylase</fullName>
    </alternativeName>
    <alternativeName>
        <fullName>CYPVIIIB1</fullName>
    </alternativeName>
    <alternativeName>
        <fullName>Cytochrome P450 8B1</fullName>
    </alternativeName>
    <alternativeName>
        <fullName>Sterol 12-alpha-hydroxylase</fullName>
    </alternativeName>
</protein>
<accession>Q9UNU6</accession>
<accession>B2RCY3</accession>
<accession>O75958</accession>
<accession>Q6NWT2</accession>
<accession>Q6NWT3</accession>
<dbReference type="EC" id="1.14.14.139" evidence="5"/>
<dbReference type="EMBL" id="AF090318">
    <property type="protein sequence ID" value="AAC63037.1"/>
    <property type="molecule type" value="mRNA"/>
</dbReference>
<dbReference type="EMBL" id="AF090320">
    <property type="protein sequence ID" value="AAD19877.1"/>
    <property type="molecule type" value="Genomic_DNA"/>
</dbReference>
<dbReference type="EMBL" id="AK315330">
    <property type="protein sequence ID" value="BAG37730.1"/>
    <property type="molecule type" value="mRNA"/>
</dbReference>
<dbReference type="EMBL" id="AC099329">
    <property type="status" value="NOT_ANNOTATED_CDS"/>
    <property type="molecule type" value="Genomic_DNA"/>
</dbReference>
<dbReference type="EMBL" id="BC067434">
    <property type="protein sequence ID" value="AAH67434.1"/>
    <property type="molecule type" value="mRNA"/>
</dbReference>
<dbReference type="EMBL" id="BC067441">
    <property type="protein sequence ID" value="AAH67441.1"/>
    <property type="molecule type" value="mRNA"/>
</dbReference>
<dbReference type="EMBL" id="BC067442">
    <property type="protein sequence ID" value="AAH67442.1"/>
    <property type="molecule type" value="mRNA"/>
</dbReference>
<dbReference type="EMBL" id="BC067444">
    <property type="protein sequence ID" value="AAH67444.1"/>
    <property type="molecule type" value="mRNA"/>
</dbReference>
<dbReference type="CCDS" id="CCDS2707.1"/>
<dbReference type="RefSeq" id="NP_004382.2">
    <property type="nucleotide sequence ID" value="NM_004391.3"/>
</dbReference>
<dbReference type="PDB" id="7LYX">
    <property type="method" value="X-ray"/>
    <property type="resolution" value="2.60 A"/>
    <property type="chains" value="A=26-501"/>
</dbReference>
<dbReference type="PDB" id="8EOH">
    <property type="method" value="X-ray"/>
    <property type="resolution" value="2.65 A"/>
    <property type="chains" value="A=26-501"/>
</dbReference>
<dbReference type="PDBsum" id="7LYX"/>
<dbReference type="PDBsum" id="8EOH"/>
<dbReference type="SMR" id="Q9UNU6"/>
<dbReference type="BioGRID" id="107954">
    <property type="interactions" value="11"/>
</dbReference>
<dbReference type="FunCoup" id="Q9UNU6">
    <property type="interactions" value="181"/>
</dbReference>
<dbReference type="IntAct" id="Q9UNU6">
    <property type="interactions" value="6"/>
</dbReference>
<dbReference type="STRING" id="9606.ENSP00000318867"/>
<dbReference type="ChEMBL" id="CHEMBL4523494"/>
<dbReference type="DrugCentral" id="Q9UNU6"/>
<dbReference type="SwissLipids" id="SLP:000001319"/>
<dbReference type="iPTMnet" id="Q9UNU6"/>
<dbReference type="PhosphoSitePlus" id="Q9UNU6"/>
<dbReference type="BioMuta" id="CYP8B1"/>
<dbReference type="DMDM" id="308153428"/>
<dbReference type="jPOST" id="Q9UNU6"/>
<dbReference type="MassIVE" id="Q9UNU6"/>
<dbReference type="PaxDb" id="9606-ENSP00000318867"/>
<dbReference type="PeptideAtlas" id="Q9UNU6"/>
<dbReference type="ProteomicsDB" id="85332"/>
<dbReference type="Antibodypedia" id="53027">
    <property type="antibodies" value="213 antibodies from 26 providers"/>
</dbReference>
<dbReference type="DNASU" id="1582"/>
<dbReference type="Ensembl" id="ENST00000316161.6">
    <property type="protein sequence ID" value="ENSP00000318867.4"/>
    <property type="gene ID" value="ENSG00000180432.6"/>
</dbReference>
<dbReference type="GeneID" id="1582"/>
<dbReference type="KEGG" id="hsa:1582"/>
<dbReference type="MANE-Select" id="ENST00000316161.6">
    <property type="protein sequence ID" value="ENSP00000318867.4"/>
    <property type="RefSeq nucleotide sequence ID" value="NM_004391.3"/>
    <property type="RefSeq protein sequence ID" value="NP_004382.2"/>
</dbReference>
<dbReference type="UCSC" id="uc003cmh.4">
    <property type="organism name" value="human"/>
</dbReference>
<dbReference type="AGR" id="HGNC:2653"/>
<dbReference type="CTD" id="1582"/>
<dbReference type="DisGeNET" id="1582"/>
<dbReference type="GeneCards" id="CYP8B1"/>
<dbReference type="HGNC" id="HGNC:2653">
    <property type="gene designation" value="CYP8B1"/>
</dbReference>
<dbReference type="HPA" id="ENSG00000180432">
    <property type="expression patterns" value="Tissue enriched (liver)"/>
</dbReference>
<dbReference type="MIM" id="602172">
    <property type="type" value="gene"/>
</dbReference>
<dbReference type="neXtProt" id="NX_Q9UNU6"/>
<dbReference type="OpenTargets" id="ENSG00000180432"/>
<dbReference type="VEuPathDB" id="HostDB:ENSG00000180432"/>
<dbReference type="eggNOG" id="KOG0684">
    <property type="taxonomic scope" value="Eukaryota"/>
</dbReference>
<dbReference type="GeneTree" id="ENSGT00940000153709"/>
<dbReference type="HOGENOM" id="CLU_018012_1_3_1"/>
<dbReference type="InParanoid" id="Q9UNU6"/>
<dbReference type="OMA" id="WGFGTTQ"/>
<dbReference type="OrthoDB" id="6692864at2759"/>
<dbReference type="PAN-GO" id="Q9UNU6">
    <property type="GO annotations" value="1 GO annotation based on evolutionary models"/>
</dbReference>
<dbReference type="PhylomeDB" id="Q9UNU6"/>
<dbReference type="TreeFam" id="TF105090"/>
<dbReference type="PathwayCommons" id="Q9UNU6"/>
<dbReference type="Reactome" id="R-HSA-193368">
    <property type="pathway name" value="Synthesis of bile acids and bile salts via 7alpha-hydroxycholesterol"/>
</dbReference>
<dbReference type="Reactome" id="R-HSA-193775">
    <property type="pathway name" value="Synthesis of bile acids and bile salts via 24-hydroxycholesterol"/>
</dbReference>
<dbReference type="Reactome" id="R-HSA-193807">
    <property type="pathway name" value="Synthesis of bile acids and bile salts via 27-hydroxycholesterol"/>
</dbReference>
<dbReference type="Reactome" id="R-HSA-197264">
    <property type="pathway name" value="Nicotinamide salvaging"/>
</dbReference>
<dbReference type="Reactome" id="R-HSA-211979">
    <property type="pathway name" value="Eicosanoids"/>
</dbReference>
<dbReference type="Reactome" id="R-HSA-211994">
    <property type="pathway name" value="Sterols are 12-hydroxylated by CYP8B1"/>
</dbReference>
<dbReference type="Reactome" id="R-HSA-2162123">
    <property type="pathway name" value="Synthesis of Prostaglandins (PG) and Thromboxanes (TX)"/>
</dbReference>
<dbReference type="SignaLink" id="Q9UNU6"/>
<dbReference type="UniPathway" id="UPA00221"/>
<dbReference type="BioGRID-ORCS" id="1582">
    <property type="hits" value="13 hits in 1144 CRISPR screens"/>
</dbReference>
<dbReference type="GeneWiki" id="CYP8B1"/>
<dbReference type="GenomeRNAi" id="1582"/>
<dbReference type="Pharos" id="Q9UNU6">
    <property type="development level" value="Tchem"/>
</dbReference>
<dbReference type="PRO" id="PR:Q9UNU6"/>
<dbReference type="Proteomes" id="UP000005640">
    <property type="component" value="Chromosome 3"/>
</dbReference>
<dbReference type="RNAct" id="Q9UNU6">
    <property type="molecule type" value="protein"/>
</dbReference>
<dbReference type="Bgee" id="ENSG00000180432">
    <property type="expression patterns" value="Expressed in right lobe of liver and 55 other cell types or tissues"/>
</dbReference>
<dbReference type="ExpressionAtlas" id="Q9UNU6">
    <property type="expression patterns" value="baseline and differential"/>
</dbReference>
<dbReference type="GO" id="GO:0005789">
    <property type="term" value="C:endoplasmic reticulum membrane"/>
    <property type="evidence" value="ECO:0000250"/>
    <property type="project" value="UniProtKB"/>
</dbReference>
<dbReference type="GO" id="GO:0020037">
    <property type="term" value="F:heme binding"/>
    <property type="evidence" value="ECO:0007669"/>
    <property type="project" value="InterPro"/>
</dbReference>
<dbReference type="GO" id="GO:0005506">
    <property type="term" value="F:iron ion binding"/>
    <property type="evidence" value="ECO:0007669"/>
    <property type="project" value="InterPro"/>
</dbReference>
<dbReference type="GO" id="GO:0019825">
    <property type="term" value="F:oxygen binding"/>
    <property type="evidence" value="ECO:0000304"/>
    <property type="project" value="ProtInc"/>
</dbReference>
<dbReference type="GO" id="GO:0008397">
    <property type="term" value="F:sterol 12-alpha-hydroxylase activity"/>
    <property type="evidence" value="ECO:0000250"/>
    <property type="project" value="UniProtKB"/>
</dbReference>
<dbReference type="GO" id="GO:0006699">
    <property type="term" value="P:bile acid biosynthetic process"/>
    <property type="evidence" value="ECO:0000250"/>
    <property type="project" value="UniProtKB"/>
</dbReference>
<dbReference type="GO" id="GO:0045797">
    <property type="term" value="P:positive regulation of intestinal cholesterol absorption"/>
    <property type="evidence" value="ECO:0000250"/>
    <property type="project" value="UniProtKB"/>
</dbReference>
<dbReference type="GO" id="GO:0070723">
    <property type="term" value="P:response to cholesterol"/>
    <property type="evidence" value="ECO:0007669"/>
    <property type="project" value="Ensembl"/>
</dbReference>
<dbReference type="GO" id="GO:0031667">
    <property type="term" value="P:response to nutrient levels"/>
    <property type="evidence" value="ECO:0007669"/>
    <property type="project" value="Ensembl"/>
</dbReference>
<dbReference type="GO" id="GO:0006694">
    <property type="term" value="P:steroid biosynthetic process"/>
    <property type="evidence" value="ECO:0007669"/>
    <property type="project" value="UniProtKB-KW"/>
</dbReference>
<dbReference type="GO" id="GO:0016125">
    <property type="term" value="P:sterol metabolic process"/>
    <property type="evidence" value="ECO:0000304"/>
    <property type="project" value="Reactome"/>
</dbReference>
<dbReference type="CDD" id="cd20633">
    <property type="entry name" value="Cyp8B1"/>
    <property type="match status" value="1"/>
</dbReference>
<dbReference type="FunFam" id="1.10.630.10:FF:000025">
    <property type="entry name" value="Prostaglandin I2 (prostacyclin) synthase"/>
    <property type="match status" value="1"/>
</dbReference>
<dbReference type="Gene3D" id="1.10.630.10">
    <property type="entry name" value="Cytochrome P450"/>
    <property type="match status" value="1"/>
</dbReference>
<dbReference type="InterPro" id="IPR001128">
    <property type="entry name" value="Cyt_P450"/>
</dbReference>
<dbReference type="InterPro" id="IPR024204">
    <property type="entry name" value="Cyt_P450_CYP7A1-type"/>
</dbReference>
<dbReference type="InterPro" id="IPR002403">
    <property type="entry name" value="Cyt_P450_E_grp-IV"/>
</dbReference>
<dbReference type="InterPro" id="IPR036396">
    <property type="entry name" value="Cyt_P450_sf"/>
</dbReference>
<dbReference type="InterPro" id="IPR030686">
    <property type="entry name" value="Cytochrome_CYP8B1"/>
</dbReference>
<dbReference type="PANTHER" id="PTHR24306">
    <property type="match status" value="1"/>
</dbReference>
<dbReference type="PANTHER" id="PTHR24306:SF0">
    <property type="entry name" value="7-ALPHA-HYDROXYCHOLEST-4-EN-3-ONE 12-ALPHA-HYDROXYLASE"/>
    <property type="match status" value="1"/>
</dbReference>
<dbReference type="Pfam" id="PF00067">
    <property type="entry name" value="p450"/>
    <property type="match status" value="1"/>
</dbReference>
<dbReference type="PIRSF" id="PIRSF500627">
    <property type="entry name" value="Cytochrome_CYP8B1"/>
    <property type="match status" value="1"/>
</dbReference>
<dbReference type="PIRSF" id="PIRSF000047">
    <property type="entry name" value="Cytochrome_CYPVIIA1"/>
    <property type="match status" value="1"/>
</dbReference>
<dbReference type="PRINTS" id="PR00465">
    <property type="entry name" value="EP450IV"/>
</dbReference>
<dbReference type="SUPFAM" id="SSF48264">
    <property type="entry name" value="Cytochrome P450"/>
    <property type="match status" value="1"/>
</dbReference>